<comment type="function">
    <text evidence="1 3">Carrier protein involved in proton-driven auxin influx. Mediates the formation of auxin gradient from developing leaves (site of auxin biosynthesis) to tips by contributing to the loading of auxin in vascular tissues and facilitating acropetal (base to tip) auxin transport within inner tissues of the root apex, and basipetal (tip to base) auxin transport within outer tissues of the root apex (By similarity). May be involved in lateral roots and nodules formation.</text>
</comment>
<comment type="subcellular location">
    <subcellularLocation>
        <location evidence="1">Cell membrane</location>
        <topology evidence="1">Multi-pass membrane protein</topology>
    </subcellularLocation>
</comment>
<comment type="tissue specificity">
    <text evidence="3 4">Shoots and roots of nodulating plants. Higher levels in roots, flowers and stems, lower in nodules, leaves, petioles and shoot apices.</text>
</comment>
<comment type="developmental stage">
    <text evidence="3">In primary roots, mostly localized in tips and to a lower extent in vasculature of older regions. In root tips, mostly expressed in the central tissues of the elongating zone (developing vasculature), in the starch-filled cells of the root cap and in some cortical cells. During lateral root development, striking expression in the proximal region of the primordium, close to the primary root central cylinder, and then in elongating cells of the developing vasculature and in developing root cap. During nodule formation, expressed in young elongated primordium, mostly in cells close to the root vasculature. In later stages, confined in small cells rich in amyloplasts with small nuclei. Near the periphery of developing nodules strong expression at the base that tapers off toward the apex. Not expressed in mature nodules.</text>
</comment>
<comment type="induction">
    <text evidence="3">Transient induction in roots by S.meliloti.</text>
</comment>
<comment type="similarity">
    <text evidence="5">Belongs to the amino acid/polyamine transporter 2 family. Amino acid/auxin permease (AAAP) (TC 2.A.18.1) subfamily.</text>
</comment>
<comment type="caution">
    <text evidence="5">Because of the similarity in sequence, the probe used to describe the developmental stages did not discriminate among the various MtLAX mRNAs.</text>
</comment>
<reference key="1">
    <citation type="journal article" date="2001" name="Mol. Plant Microbe Interact.">
        <title>Expression studies on AUX1-like genes in Medicago truncatula suggest that auxin is required at two steps in early nodule development.</title>
        <authorList>
            <person name="de Billy F."/>
            <person name="Grosjean C."/>
            <person name="May S."/>
            <person name="Bennett M.J."/>
            <person name="Cullimore J.V."/>
        </authorList>
    </citation>
    <scope>NUCLEOTIDE SEQUENCE [MRNA]</scope>
    <scope>FUNCTION</scope>
    <scope>TISSUE SPECIFICITY</scope>
    <scope>INDUCTION</scope>
    <scope>DEVELOPMENTAL STAGE</scope>
    <source>
        <strain>cv. Jemalong</strain>
        <tissue>Root</tissue>
    </source>
</reference>
<reference key="2">
    <citation type="journal article" date="2004" name="Mol. Genet. Genomics">
        <title>The PIN and LAX families of auxin transport genes in Medicago truncatula.</title>
        <authorList>
            <person name="Schnabel E.L."/>
            <person name="Frugoli J."/>
        </authorList>
    </citation>
    <scope>NUCLEOTIDE SEQUENCE [GENOMIC DNA]</scope>
    <scope>GENE FAMILY</scope>
    <scope>TISSUE SPECIFICITY</scope>
</reference>
<proteinExistence type="evidence at transcript level"/>
<dbReference type="EMBL" id="AJ299398">
    <property type="protein sequence ID" value="CAC12996.1"/>
    <property type="molecule type" value="mRNA"/>
</dbReference>
<dbReference type="EMBL" id="AY115843">
    <property type="protein sequence ID" value="AAM55304.1"/>
    <property type="molecule type" value="Genomic_DNA"/>
</dbReference>
<dbReference type="SMR" id="Q9FEL7"/>
<dbReference type="GlyCosmos" id="Q9FEL7">
    <property type="glycosylation" value="2 sites, No reported glycans"/>
</dbReference>
<dbReference type="PaxDb" id="3880-AES79446"/>
<dbReference type="EnsemblPlants" id="rna40886">
    <property type="protein sequence ID" value="RHN46404.1"/>
    <property type="gene ID" value="gene40886"/>
</dbReference>
<dbReference type="GeneID" id="11407085"/>
<dbReference type="Gramene" id="rna40886">
    <property type="protein sequence ID" value="RHN46404.1"/>
    <property type="gene ID" value="gene40886"/>
</dbReference>
<dbReference type="KEGG" id="mtr:11407085"/>
<dbReference type="eggNOG" id="KOG1303">
    <property type="taxonomic scope" value="Eukaryota"/>
</dbReference>
<dbReference type="HOGENOM" id="CLU_027994_2_0_1"/>
<dbReference type="OMA" id="MSSILWH"/>
<dbReference type="OrthoDB" id="40134at2759"/>
<dbReference type="ExpressionAtlas" id="Q9FEL7">
    <property type="expression patterns" value="differential"/>
</dbReference>
<dbReference type="GO" id="GO:0005886">
    <property type="term" value="C:plasma membrane"/>
    <property type="evidence" value="ECO:0007669"/>
    <property type="project" value="UniProtKB-SubCell"/>
</dbReference>
<dbReference type="GO" id="GO:0015293">
    <property type="term" value="F:symporter activity"/>
    <property type="evidence" value="ECO:0007669"/>
    <property type="project" value="UniProtKB-KW"/>
</dbReference>
<dbReference type="GO" id="GO:0006865">
    <property type="term" value="P:amino acid transport"/>
    <property type="evidence" value="ECO:0007669"/>
    <property type="project" value="UniProtKB-KW"/>
</dbReference>
<dbReference type="GO" id="GO:0009734">
    <property type="term" value="P:auxin-activated signaling pathway"/>
    <property type="evidence" value="ECO:0007669"/>
    <property type="project" value="UniProtKB-KW"/>
</dbReference>
<dbReference type="InterPro" id="IPR013057">
    <property type="entry name" value="AA_transpt_TM"/>
</dbReference>
<dbReference type="PANTHER" id="PTHR48017">
    <property type="entry name" value="OS05G0424000 PROTEIN-RELATED"/>
    <property type="match status" value="1"/>
</dbReference>
<dbReference type="Pfam" id="PF01490">
    <property type="entry name" value="Aa_trans"/>
    <property type="match status" value="1"/>
</dbReference>
<gene>
    <name type="primary">LAX2</name>
</gene>
<keyword id="KW-0029">Amino-acid transport</keyword>
<keyword id="KW-0927">Auxin signaling pathway</keyword>
<keyword id="KW-1003">Cell membrane</keyword>
<keyword id="KW-0325">Glycoprotein</keyword>
<keyword id="KW-0472">Membrane</keyword>
<keyword id="KW-0769">Symport</keyword>
<keyword id="KW-0812">Transmembrane</keyword>
<keyword id="KW-1133">Transmembrane helix</keyword>
<keyword id="KW-0813">Transport</keyword>
<accession>Q9FEL7</accession>
<evidence type="ECO:0000250" key="1"/>
<evidence type="ECO:0000255" key="2"/>
<evidence type="ECO:0000269" key="3">
    <source>
    </source>
</evidence>
<evidence type="ECO:0000269" key="4">
    <source>
    </source>
</evidence>
<evidence type="ECO:0000305" key="5"/>
<organism>
    <name type="scientific">Medicago truncatula</name>
    <name type="common">Barrel medic</name>
    <name type="synonym">Medicago tribuloides</name>
    <dbReference type="NCBI Taxonomy" id="3880"/>
    <lineage>
        <taxon>Eukaryota</taxon>
        <taxon>Viridiplantae</taxon>
        <taxon>Streptophyta</taxon>
        <taxon>Embryophyta</taxon>
        <taxon>Tracheophyta</taxon>
        <taxon>Spermatophyta</taxon>
        <taxon>Magnoliopsida</taxon>
        <taxon>eudicotyledons</taxon>
        <taxon>Gunneridae</taxon>
        <taxon>Pentapetalae</taxon>
        <taxon>rosids</taxon>
        <taxon>fabids</taxon>
        <taxon>Fabales</taxon>
        <taxon>Fabaceae</taxon>
        <taxon>Papilionoideae</taxon>
        <taxon>50 kb inversion clade</taxon>
        <taxon>NPAAA clade</taxon>
        <taxon>Hologalegina</taxon>
        <taxon>IRL clade</taxon>
        <taxon>Trifolieae</taxon>
        <taxon>Medicago</taxon>
    </lineage>
</organism>
<feature type="chain" id="PRO_0000093846" description="Auxin transporter-like protein 2">
    <location>
        <begin position="1"/>
        <end position="484"/>
    </location>
</feature>
<feature type="topological domain" description="Cytoplasmic" evidence="2">
    <location>
        <begin position="1"/>
        <end position="59"/>
    </location>
</feature>
<feature type="transmembrane region" description="Helical" evidence="2">
    <location>
        <begin position="60"/>
        <end position="77"/>
    </location>
</feature>
<feature type="topological domain" description="Extracellular" evidence="2">
    <location>
        <begin position="78"/>
        <end position="79"/>
    </location>
</feature>
<feature type="transmembrane region" description="Helical" evidence="2">
    <location>
        <begin position="80"/>
        <end position="100"/>
    </location>
</feature>
<feature type="topological domain" description="Cytoplasmic" evidence="2">
    <location>
        <begin position="101"/>
        <end position="135"/>
    </location>
</feature>
<feature type="transmembrane region" description="Helical" evidence="2">
    <location>
        <begin position="136"/>
        <end position="156"/>
    </location>
</feature>
<feature type="topological domain" description="Extracellular" evidence="2">
    <location>
        <begin position="157"/>
        <end position="172"/>
    </location>
</feature>
<feature type="transmembrane region" description="Helical" evidence="2">
    <location>
        <begin position="173"/>
        <end position="193"/>
    </location>
</feature>
<feature type="topological domain" description="Cytoplasmic" evidence="2">
    <location>
        <begin position="194"/>
        <end position="196"/>
    </location>
</feature>
<feature type="transmembrane region" description="Helical" evidence="2">
    <location>
        <begin position="197"/>
        <end position="217"/>
    </location>
</feature>
<feature type="topological domain" description="Extracellular" evidence="2">
    <location>
        <begin position="218"/>
        <end position="232"/>
    </location>
</feature>
<feature type="transmembrane region" description="Helical" evidence="2">
    <location>
        <begin position="233"/>
        <end position="253"/>
    </location>
</feature>
<feature type="topological domain" description="Cytoplasmic" evidence="2">
    <location>
        <begin position="254"/>
        <end position="266"/>
    </location>
</feature>
<feature type="transmembrane region" description="Helical" evidence="2">
    <location>
        <begin position="267"/>
        <end position="287"/>
    </location>
</feature>
<feature type="topological domain" description="Extracellular" evidence="2">
    <location>
        <begin position="288"/>
        <end position="314"/>
    </location>
</feature>
<feature type="transmembrane region" description="Helical" evidence="2">
    <location>
        <begin position="315"/>
        <end position="335"/>
    </location>
</feature>
<feature type="topological domain" description="Cytoplasmic" evidence="2">
    <location>
        <begin position="336"/>
        <end position="356"/>
    </location>
</feature>
<feature type="transmembrane region" description="Helical" evidence="2">
    <location>
        <begin position="357"/>
        <end position="377"/>
    </location>
</feature>
<feature type="topological domain" description="Extracellular" evidence="2">
    <location>
        <position position="378"/>
    </location>
</feature>
<feature type="transmembrane region" description="Helical" evidence="2">
    <location>
        <begin position="379"/>
        <end position="399"/>
    </location>
</feature>
<feature type="topological domain" description="Cytoplasmic" evidence="2">
    <location>
        <begin position="400"/>
        <end position="425"/>
    </location>
</feature>
<feature type="transmembrane region" description="Helical" evidence="2">
    <location>
        <begin position="426"/>
        <end position="446"/>
    </location>
</feature>
<feature type="topological domain" description="Extracellular" evidence="2">
    <location>
        <begin position="447"/>
        <end position="484"/>
    </location>
</feature>
<feature type="glycosylation site" description="N-linked (GlcNAc...) asparagine" evidence="2">
    <location>
        <position position="223"/>
    </location>
</feature>
<feature type="glycosylation site" description="N-linked (GlcNAc...) asparagine" evidence="2">
    <location>
        <position position="297"/>
    </location>
</feature>
<protein>
    <recommendedName>
        <fullName>Auxin transporter-like protein 2</fullName>
    </recommendedName>
    <alternativeName>
        <fullName>AUX1-like protein 2</fullName>
    </alternativeName>
    <alternativeName>
        <fullName>MtLAX2</fullName>
    </alternativeName>
</protein>
<sequence>MLPQKQGEEAIVSSFNETDQQEGVVGREEEVEDHSFSVKNFLWHGGSVWDAWFSCASNQVAQVLLTLPYSFSQLGMLSGILLQVFYGILGSWTAYLISVLYVEYRSRKEKENVNFKNHVIQWFEVLDGLLGPYWKALGLAFNCTFLLFGSVIQLIACASNIYYINDNLDKRTWTYIFGACCATTVFIPSFHNYRIWSFLGLGMTTYTAWYLTIASIVHGQAENVTHTGPKKLVLYFTGATNILYTFGGHAVTVEIMHAMWKPQKFKYIYLMATLYVFTLTIPSATAVYWAFGDELLNHSNAFSLLPKNGWRDGAVILMLIHQFITFGFACTPLYFVWEKVIGMHDTRSICLRALARLPVVIPIWFLAIIFPFFGPINSAVGALLVSFTVYIIPSAAHMLTYRKASARKNAAEKPPFFMPSWTAMYIFNAFIVIWVLVVGFGFGGWASMTNFIRQIDTFGLFAKCYQCKPPPVMAAAPPPHALHH</sequence>
<name>LAX2_MEDTR</name>